<proteinExistence type="inferred from homology"/>
<name>DAPAT_PROM3</name>
<gene>
    <name evidence="1" type="primary">dapL</name>
    <name type="ordered locus">P9303_23741</name>
</gene>
<feature type="chain" id="PRO_0000312536" description="LL-diaminopimelate aminotransferase">
    <location>
        <begin position="1"/>
        <end position="408"/>
    </location>
</feature>
<feature type="binding site" evidence="1">
    <location>
        <position position="15"/>
    </location>
    <ligand>
        <name>substrate</name>
    </ligand>
</feature>
<feature type="binding site" evidence="1">
    <location>
        <position position="42"/>
    </location>
    <ligand>
        <name>substrate</name>
    </ligand>
</feature>
<feature type="binding site" evidence="1">
    <location>
        <position position="72"/>
    </location>
    <ligand>
        <name>pyridoxal 5'-phosphate</name>
        <dbReference type="ChEBI" id="CHEBI:597326"/>
    </ligand>
</feature>
<feature type="binding site" evidence="1">
    <location>
        <begin position="108"/>
        <end position="109"/>
    </location>
    <ligand>
        <name>pyridoxal 5'-phosphate</name>
        <dbReference type="ChEBI" id="CHEBI:597326"/>
    </ligand>
</feature>
<feature type="binding site" evidence="1">
    <location>
        <position position="109"/>
    </location>
    <ligand>
        <name>substrate</name>
    </ligand>
</feature>
<feature type="binding site" evidence="1">
    <location>
        <position position="132"/>
    </location>
    <ligand>
        <name>pyridoxal 5'-phosphate</name>
        <dbReference type="ChEBI" id="CHEBI:597326"/>
    </ligand>
</feature>
<feature type="binding site" evidence="1">
    <location>
        <position position="132"/>
    </location>
    <ligand>
        <name>substrate</name>
    </ligand>
</feature>
<feature type="binding site" evidence="1">
    <location>
        <position position="187"/>
    </location>
    <ligand>
        <name>pyridoxal 5'-phosphate</name>
        <dbReference type="ChEBI" id="CHEBI:597326"/>
    </ligand>
</feature>
<feature type="binding site" evidence="1">
    <location>
        <position position="187"/>
    </location>
    <ligand>
        <name>substrate</name>
    </ligand>
</feature>
<feature type="binding site" evidence="1">
    <location>
        <position position="218"/>
    </location>
    <ligand>
        <name>pyridoxal 5'-phosphate</name>
        <dbReference type="ChEBI" id="CHEBI:597326"/>
    </ligand>
</feature>
<feature type="binding site" evidence="1">
    <location>
        <begin position="246"/>
        <end position="248"/>
    </location>
    <ligand>
        <name>pyridoxal 5'-phosphate</name>
        <dbReference type="ChEBI" id="CHEBI:597326"/>
    </ligand>
</feature>
<feature type="binding site" evidence="1">
    <location>
        <position position="257"/>
    </location>
    <ligand>
        <name>pyridoxal 5'-phosphate</name>
        <dbReference type="ChEBI" id="CHEBI:597326"/>
    </ligand>
</feature>
<feature type="binding site" evidence="1">
    <location>
        <position position="292"/>
    </location>
    <ligand>
        <name>pyridoxal 5'-phosphate</name>
        <dbReference type="ChEBI" id="CHEBI:597326"/>
    </ligand>
</feature>
<feature type="binding site" evidence="1">
    <location>
        <position position="292"/>
    </location>
    <ligand>
        <name>substrate</name>
    </ligand>
</feature>
<feature type="binding site" evidence="1">
    <location>
        <position position="388"/>
    </location>
    <ligand>
        <name>substrate</name>
    </ligand>
</feature>
<feature type="modified residue" description="N6-(pyridoxal phosphate)lysine" evidence="1">
    <location>
        <position position="249"/>
    </location>
</feature>
<accession>A2CC97</accession>
<protein>
    <recommendedName>
        <fullName evidence="1">LL-diaminopimelate aminotransferase</fullName>
        <shortName evidence="1">DAP-AT</shortName>
        <shortName evidence="1">DAP-aminotransferase</shortName>
        <shortName evidence="1">LL-DAP-aminotransferase</shortName>
        <ecNumber evidence="1">2.6.1.83</ecNumber>
    </recommendedName>
</protein>
<comment type="function">
    <text evidence="1">Involved in the synthesis of meso-diaminopimelate (m-DAP or DL-DAP), required for both lysine and peptidoglycan biosynthesis. Catalyzes the direct conversion of tetrahydrodipicolinate to LL-diaminopimelate.</text>
</comment>
<comment type="catalytic activity">
    <reaction evidence="1">
        <text>(2S,6S)-2,6-diaminopimelate + 2-oxoglutarate = (S)-2,3,4,5-tetrahydrodipicolinate + L-glutamate + H2O + H(+)</text>
        <dbReference type="Rhea" id="RHEA:23988"/>
        <dbReference type="ChEBI" id="CHEBI:15377"/>
        <dbReference type="ChEBI" id="CHEBI:15378"/>
        <dbReference type="ChEBI" id="CHEBI:16810"/>
        <dbReference type="ChEBI" id="CHEBI:16845"/>
        <dbReference type="ChEBI" id="CHEBI:29985"/>
        <dbReference type="ChEBI" id="CHEBI:57609"/>
        <dbReference type="EC" id="2.6.1.83"/>
    </reaction>
</comment>
<comment type="cofactor">
    <cofactor evidence="1">
        <name>pyridoxal 5'-phosphate</name>
        <dbReference type="ChEBI" id="CHEBI:597326"/>
    </cofactor>
</comment>
<comment type="pathway">
    <text evidence="1">Amino-acid biosynthesis; L-lysine biosynthesis via DAP pathway; LL-2,6-diaminopimelate from (S)-tetrahydrodipicolinate (aminotransferase route): step 1/1.</text>
</comment>
<comment type="subunit">
    <text evidence="1">Homodimer.</text>
</comment>
<comment type="similarity">
    <text evidence="1">Belongs to the class-I pyridoxal-phosphate-dependent aminotransferase family. LL-diaminopimelate aminotransferase subfamily.</text>
</comment>
<comment type="sequence caution" evidence="2">
    <conflict type="erroneous initiation">
        <sequence resource="EMBL-CDS" id="ABM79107"/>
    </conflict>
</comment>
<organism>
    <name type="scientific">Prochlorococcus marinus (strain MIT 9303)</name>
    <dbReference type="NCBI Taxonomy" id="59922"/>
    <lineage>
        <taxon>Bacteria</taxon>
        <taxon>Bacillati</taxon>
        <taxon>Cyanobacteriota</taxon>
        <taxon>Cyanophyceae</taxon>
        <taxon>Synechococcales</taxon>
        <taxon>Prochlorococcaceae</taxon>
        <taxon>Prochlorococcus</taxon>
    </lineage>
</organism>
<keyword id="KW-0032">Aminotransferase</keyword>
<keyword id="KW-0663">Pyridoxal phosphate</keyword>
<keyword id="KW-0808">Transferase</keyword>
<evidence type="ECO:0000255" key="1">
    <source>
        <dbReference type="HAMAP-Rule" id="MF_01642"/>
    </source>
</evidence>
<evidence type="ECO:0000305" key="2"/>
<sequence length="408" mass="44812">MVQVNSNYLKLKAGYLFPEIARRIKSFSEANPDAALIRLGIGDVTEPLPLACRNAMKVAIDEMGTNTGFHGYGPEQGYDWLREAIAKHDFQNKGCQINAEEIFVSDGSKCDSSNILDILGSSNRIAVTDPVYPVYVDSNVMAGRTGEANQSGRYAGLSYLPINAENGFAAKIPSEPVDLIYLCFPNNPTGAVATRAQLQEWVNYARTNSVLILFDAAYEAFIQNPDLPHSIYEIEGARECAIEFRSFSKNAGFTGTRCAFTVVPKGLKGKSDDGSDVELWNLWNRRQSTKFNGVSYIIQRGAEAVYSAQGQGEINALVSFYMRNAAIIRRELTAAGIEVHGGEHAPYVWLKTPDDMDSWGFFDHLLHNANVVGTPGSGFGAAGEGYFRLSAFNSRVNVDEAMRRIRAL</sequence>
<dbReference type="EC" id="2.6.1.83" evidence="1"/>
<dbReference type="EMBL" id="CP000554">
    <property type="protein sequence ID" value="ABM79107.1"/>
    <property type="status" value="ALT_INIT"/>
    <property type="molecule type" value="Genomic_DNA"/>
</dbReference>
<dbReference type="RefSeq" id="WP_041375215.1">
    <property type="nucleotide sequence ID" value="NC_008820.1"/>
</dbReference>
<dbReference type="SMR" id="A2CC97"/>
<dbReference type="STRING" id="59922.P9303_23741"/>
<dbReference type="KEGG" id="pmf:P9303_23741"/>
<dbReference type="HOGENOM" id="CLU_051433_0_0_3"/>
<dbReference type="BioCyc" id="PMAR59922:G1G80-2087-MONOMER"/>
<dbReference type="UniPathway" id="UPA00034">
    <property type="reaction ID" value="UER00466"/>
</dbReference>
<dbReference type="Proteomes" id="UP000002274">
    <property type="component" value="Chromosome"/>
</dbReference>
<dbReference type="GO" id="GO:0010285">
    <property type="term" value="F:L,L-diaminopimelate aminotransferase activity"/>
    <property type="evidence" value="ECO:0007669"/>
    <property type="project" value="UniProtKB-UniRule"/>
</dbReference>
<dbReference type="GO" id="GO:0030170">
    <property type="term" value="F:pyridoxal phosphate binding"/>
    <property type="evidence" value="ECO:0007669"/>
    <property type="project" value="UniProtKB-UniRule"/>
</dbReference>
<dbReference type="GO" id="GO:0033362">
    <property type="term" value="P:lysine biosynthetic process via diaminopimelate, diaminopimelate-aminotransferase pathway"/>
    <property type="evidence" value="ECO:0007669"/>
    <property type="project" value="UniProtKB-UniRule"/>
</dbReference>
<dbReference type="CDD" id="cd00609">
    <property type="entry name" value="AAT_like"/>
    <property type="match status" value="1"/>
</dbReference>
<dbReference type="FunFam" id="3.40.640.10:FF:000099">
    <property type="entry name" value="LL-diaminopimelate aminotransferase, chloroplastic"/>
    <property type="match status" value="1"/>
</dbReference>
<dbReference type="Gene3D" id="3.90.1150.10">
    <property type="entry name" value="Aspartate Aminotransferase, domain 1"/>
    <property type="match status" value="1"/>
</dbReference>
<dbReference type="Gene3D" id="3.40.640.10">
    <property type="entry name" value="Type I PLP-dependent aspartate aminotransferase-like (Major domain)"/>
    <property type="match status" value="1"/>
</dbReference>
<dbReference type="HAMAP" id="MF_01642">
    <property type="entry name" value="DapL_aminotrans_1"/>
    <property type="match status" value="1"/>
</dbReference>
<dbReference type="InterPro" id="IPR004839">
    <property type="entry name" value="Aminotransferase_I/II_large"/>
</dbReference>
<dbReference type="InterPro" id="IPR019942">
    <property type="entry name" value="DapL/ALD1"/>
</dbReference>
<dbReference type="InterPro" id="IPR015424">
    <property type="entry name" value="PyrdxlP-dep_Trfase"/>
</dbReference>
<dbReference type="InterPro" id="IPR015421">
    <property type="entry name" value="PyrdxlP-dep_Trfase_major"/>
</dbReference>
<dbReference type="InterPro" id="IPR015422">
    <property type="entry name" value="PyrdxlP-dep_Trfase_small"/>
</dbReference>
<dbReference type="NCBIfam" id="TIGR03542">
    <property type="entry name" value="DAPAT_plant"/>
    <property type="match status" value="1"/>
</dbReference>
<dbReference type="PANTHER" id="PTHR43144">
    <property type="entry name" value="AMINOTRANSFERASE"/>
    <property type="match status" value="1"/>
</dbReference>
<dbReference type="Pfam" id="PF00155">
    <property type="entry name" value="Aminotran_1_2"/>
    <property type="match status" value="1"/>
</dbReference>
<dbReference type="SUPFAM" id="SSF53383">
    <property type="entry name" value="PLP-dependent transferases"/>
    <property type="match status" value="1"/>
</dbReference>
<reference key="1">
    <citation type="journal article" date="2007" name="PLoS Genet.">
        <title>Patterns and implications of gene gain and loss in the evolution of Prochlorococcus.</title>
        <authorList>
            <person name="Kettler G.C."/>
            <person name="Martiny A.C."/>
            <person name="Huang K."/>
            <person name="Zucker J."/>
            <person name="Coleman M.L."/>
            <person name="Rodrigue S."/>
            <person name="Chen F."/>
            <person name="Lapidus A."/>
            <person name="Ferriera S."/>
            <person name="Johnson J."/>
            <person name="Steglich C."/>
            <person name="Church G.M."/>
            <person name="Richardson P."/>
            <person name="Chisholm S.W."/>
        </authorList>
    </citation>
    <scope>NUCLEOTIDE SEQUENCE [LARGE SCALE GENOMIC DNA]</scope>
    <source>
        <strain>MIT 9303</strain>
    </source>
</reference>